<protein>
    <recommendedName>
        <fullName evidence="1">LexA repressor</fullName>
        <ecNumber evidence="1">3.4.21.88</ecNumber>
    </recommendedName>
</protein>
<accession>B9MI78</accession>
<sequence>MLDSPKLTARQQQILDLIQTAIARTGAPPTRAEIAAELGFKSANAAEEHLQALARKGVIELVSGTSRGIRLRGETVRNINAARGAQFNLPIPGLSQLTLPLVGRVAAGSPILAQEHVDQTYTVEGSLFAHKPDYLLKVRGMSMRDAGIMDGDLLAVQATREARNGQIIVARLGDDVTVKRLRRTGSAIELLPENPDYPVIRVEPGEPFEIEGLAVGLIRNTMLM</sequence>
<name>LEXA_ACIET</name>
<reference key="1">
    <citation type="submission" date="2009-01" db="EMBL/GenBank/DDBJ databases">
        <title>Complete sequence of Diaphorobacter sp. TPSY.</title>
        <authorList>
            <consortium name="US DOE Joint Genome Institute"/>
            <person name="Lucas S."/>
            <person name="Copeland A."/>
            <person name="Lapidus A."/>
            <person name="Glavina del Rio T."/>
            <person name="Tice H."/>
            <person name="Bruce D."/>
            <person name="Goodwin L."/>
            <person name="Pitluck S."/>
            <person name="Chertkov O."/>
            <person name="Brettin T."/>
            <person name="Detter J.C."/>
            <person name="Han C."/>
            <person name="Larimer F."/>
            <person name="Land M."/>
            <person name="Hauser L."/>
            <person name="Kyrpides N."/>
            <person name="Mikhailova N."/>
            <person name="Coates J.D."/>
        </authorList>
    </citation>
    <scope>NUCLEOTIDE SEQUENCE [LARGE SCALE GENOMIC DNA]</scope>
    <source>
        <strain>TPSY</strain>
    </source>
</reference>
<proteinExistence type="inferred from homology"/>
<organism>
    <name type="scientific">Acidovorax ebreus (strain TPSY)</name>
    <name type="common">Diaphorobacter sp. (strain TPSY)</name>
    <dbReference type="NCBI Taxonomy" id="535289"/>
    <lineage>
        <taxon>Bacteria</taxon>
        <taxon>Pseudomonadati</taxon>
        <taxon>Pseudomonadota</taxon>
        <taxon>Betaproteobacteria</taxon>
        <taxon>Burkholderiales</taxon>
        <taxon>Comamonadaceae</taxon>
        <taxon>Diaphorobacter</taxon>
    </lineage>
</organism>
<evidence type="ECO:0000255" key="1">
    <source>
        <dbReference type="HAMAP-Rule" id="MF_00015"/>
    </source>
</evidence>
<dbReference type="EC" id="3.4.21.88" evidence="1"/>
<dbReference type="EMBL" id="CP001392">
    <property type="protein sequence ID" value="ACM33010.1"/>
    <property type="molecule type" value="Genomic_DNA"/>
</dbReference>
<dbReference type="RefSeq" id="WP_011805517.1">
    <property type="nucleotide sequence ID" value="NC_011992.1"/>
</dbReference>
<dbReference type="SMR" id="B9MI78"/>
<dbReference type="MEROPS" id="S24.001"/>
<dbReference type="GeneID" id="84681753"/>
<dbReference type="KEGG" id="dia:Dtpsy_1549"/>
<dbReference type="eggNOG" id="COG1974">
    <property type="taxonomic scope" value="Bacteria"/>
</dbReference>
<dbReference type="HOGENOM" id="CLU_066192_45_3_4"/>
<dbReference type="Proteomes" id="UP000000450">
    <property type="component" value="Chromosome"/>
</dbReference>
<dbReference type="GO" id="GO:0003677">
    <property type="term" value="F:DNA binding"/>
    <property type="evidence" value="ECO:0007669"/>
    <property type="project" value="UniProtKB-UniRule"/>
</dbReference>
<dbReference type="GO" id="GO:0004252">
    <property type="term" value="F:serine-type endopeptidase activity"/>
    <property type="evidence" value="ECO:0007669"/>
    <property type="project" value="UniProtKB-UniRule"/>
</dbReference>
<dbReference type="GO" id="GO:0006281">
    <property type="term" value="P:DNA repair"/>
    <property type="evidence" value="ECO:0007669"/>
    <property type="project" value="UniProtKB-UniRule"/>
</dbReference>
<dbReference type="GO" id="GO:0006260">
    <property type="term" value="P:DNA replication"/>
    <property type="evidence" value="ECO:0007669"/>
    <property type="project" value="UniProtKB-UniRule"/>
</dbReference>
<dbReference type="GO" id="GO:0045892">
    <property type="term" value="P:negative regulation of DNA-templated transcription"/>
    <property type="evidence" value="ECO:0007669"/>
    <property type="project" value="UniProtKB-UniRule"/>
</dbReference>
<dbReference type="GO" id="GO:0006508">
    <property type="term" value="P:proteolysis"/>
    <property type="evidence" value="ECO:0007669"/>
    <property type="project" value="InterPro"/>
</dbReference>
<dbReference type="GO" id="GO:0009432">
    <property type="term" value="P:SOS response"/>
    <property type="evidence" value="ECO:0007669"/>
    <property type="project" value="UniProtKB-UniRule"/>
</dbReference>
<dbReference type="CDD" id="cd06529">
    <property type="entry name" value="S24_LexA-like"/>
    <property type="match status" value="1"/>
</dbReference>
<dbReference type="FunFam" id="1.10.10.10:FF:000009">
    <property type="entry name" value="LexA repressor"/>
    <property type="match status" value="1"/>
</dbReference>
<dbReference type="FunFam" id="2.10.109.10:FF:000001">
    <property type="entry name" value="LexA repressor"/>
    <property type="match status" value="1"/>
</dbReference>
<dbReference type="Gene3D" id="2.10.109.10">
    <property type="entry name" value="Umud Fragment, subunit A"/>
    <property type="match status" value="1"/>
</dbReference>
<dbReference type="Gene3D" id="1.10.10.10">
    <property type="entry name" value="Winged helix-like DNA-binding domain superfamily/Winged helix DNA-binding domain"/>
    <property type="match status" value="1"/>
</dbReference>
<dbReference type="HAMAP" id="MF_00015">
    <property type="entry name" value="LexA"/>
    <property type="match status" value="1"/>
</dbReference>
<dbReference type="InterPro" id="IPR006200">
    <property type="entry name" value="LexA"/>
</dbReference>
<dbReference type="InterPro" id="IPR039418">
    <property type="entry name" value="LexA-like"/>
</dbReference>
<dbReference type="InterPro" id="IPR036286">
    <property type="entry name" value="LexA/Signal_pep-like_sf"/>
</dbReference>
<dbReference type="InterPro" id="IPR006199">
    <property type="entry name" value="LexA_DNA-bd_dom"/>
</dbReference>
<dbReference type="InterPro" id="IPR050077">
    <property type="entry name" value="LexA_repressor"/>
</dbReference>
<dbReference type="InterPro" id="IPR006197">
    <property type="entry name" value="Peptidase_S24_LexA"/>
</dbReference>
<dbReference type="InterPro" id="IPR015927">
    <property type="entry name" value="Peptidase_S24_S26A/B/C"/>
</dbReference>
<dbReference type="InterPro" id="IPR036388">
    <property type="entry name" value="WH-like_DNA-bd_sf"/>
</dbReference>
<dbReference type="InterPro" id="IPR036390">
    <property type="entry name" value="WH_DNA-bd_sf"/>
</dbReference>
<dbReference type="NCBIfam" id="TIGR00498">
    <property type="entry name" value="lexA"/>
    <property type="match status" value="1"/>
</dbReference>
<dbReference type="PANTHER" id="PTHR33516">
    <property type="entry name" value="LEXA REPRESSOR"/>
    <property type="match status" value="1"/>
</dbReference>
<dbReference type="PANTHER" id="PTHR33516:SF2">
    <property type="entry name" value="LEXA REPRESSOR-RELATED"/>
    <property type="match status" value="1"/>
</dbReference>
<dbReference type="Pfam" id="PF01726">
    <property type="entry name" value="LexA_DNA_bind"/>
    <property type="match status" value="1"/>
</dbReference>
<dbReference type="Pfam" id="PF00717">
    <property type="entry name" value="Peptidase_S24"/>
    <property type="match status" value="1"/>
</dbReference>
<dbReference type="PRINTS" id="PR00726">
    <property type="entry name" value="LEXASERPTASE"/>
</dbReference>
<dbReference type="SUPFAM" id="SSF51306">
    <property type="entry name" value="LexA/Signal peptidase"/>
    <property type="match status" value="1"/>
</dbReference>
<dbReference type="SUPFAM" id="SSF46785">
    <property type="entry name" value="Winged helix' DNA-binding domain"/>
    <property type="match status" value="1"/>
</dbReference>
<keyword id="KW-0068">Autocatalytic cleavage</keyword>
<keyword id="KW-0227">DNA damage</keyword>
<keyword id="KW-0234">DNA repair</keyword>
<keyword id="KW-0235">DNA replication</keyword>
<keyword id="KW-0238">DNA-binding</keyword>
<keyword id="KW-0378">Hydrolase</keyword>
<keyword id="KW-1185">Reference proteome</keyword>
<keyword id="KW-0678">Repressor</keyword>
<keyword id="KW-0742">SOS response</keyword>
<keyword id="KW-0804">Transcription</keyword>
<keyword id="KW-0805">Transcription regulation</keyword>
<comment type="function">
    <text evidence="1">Represses a number of genes involved in the response to DNA damage (SOS response), including recA and lexA. In the presence of single-stranded DNA, RecA interacts with LexA causing an autocatalytic cleavage which disrupts the DNA-binding part of LexA, leading to derepression of the SOS regulon and eventually DNA repair.</text>
</comment>
<comment type="catalytic activity">
    <reaction evidence="1">
        <text>Hydrolysis of Ala-|-Gly bond in repressor LexA.</text>
        <dbReference type="EC" id="3.4.21.88"/>
    </reaction>
</comment>
<comment type="subunit">
    <text evidence="1">Homodimer.</text>
</comment>
<comment type="similarity">
    <text evidence="1">Belongs to the peptidase S24 family.</text>
</comment>
<feature type="chain" id="PRO_1000116603" description="LexA repressor">
    <location>
        <begin position="1"/>
        <end position="224"/>
    </location>
</feature>
<feature type="DNA-binding region" description="H-T-H motif" evidence="1">
    <location>
        <begin position="31"/>
        <end position="51"/>
    </location>
</feature>
<feature type="active site" description="For autocatalytic cleavage activity" evidence="1">
    <location>
        <position position="142"/>
    </location>
</feature>
<feature type="active site" description="For autocatalytic cleavage activity" evidence="1">
    <location>
        <position position="179"/>
    </location>
</feature>
<feature type="site" description="Cleavage; by autolysis" evidence="1">
    <location>
        <begin position="107"/>
        <end position="108"/>
    </location>
</feature>
<gene>
    <name evidence="1" type="primary">lexA</name>
    <name type="ordered locus">Dtpsy_1549</name>
</gene>